<organism>
    <name type="scientific">Homo sapiens</name>
    <name type="common">Human</name>
    <dbReference type="NCBI Taxonomy" id="9606"/>
    <lineage>
        <taxon>Eukaryota</taxon>
        <taxon>Metazoa</taxon>
        <taxon>Chordata</taxon>
        <taxon>Craniata</taxon>
        <taxon>Vertebrata</taxon>
        <taxon>Euteleostomi</taxon>
        <taxon>Mammalia</taxon>
        <taxon>Eutheria</taxon>
        <taxon>Euarchontoglires</taxon>
        <taxon>Primates</taxon>
        <taxon>Haplorrhini</taxon>
        <taxon>Catarrhini</taxon>
        <taxon>Hominidae</taxon>
        <taxon>Homo</taxon>
    </lineage>
</organism>
<comment type="function">
    <text evidence="1 3">Required for mesendoderm differentiation (By similarity). Interacts with glucose transporters and promotes glucose uptake (PubMed:35810171). Probably augments the glucose uptake capacity of glucose transporter proteins to meet the energy needs of mesendoderm differentiation (By similarity).</text>
</comment>
<comment type="subunit">
    <text evidence="3">Interacts with glucose transporters SLC2A1/GLUT1 and SLC2A3/GLUT3; the interactions may promote SLC2A1- and SLC2A3-mediated glucose transport to meet the energy needs of mesendoderm differentiation.</text>
</comment>
<comment type="subcellular location">
    <subcellularLocation>
        <location evidence="1">Cell membrane</location>
        <topology evidence="2">Single-pass membrane protein</topology>
    </subcellularLocation>
</comment>
<comment type="caution">
    <text evidence="4">This was previously named TMEM55 and corresponded to a 130-residue protein. However, recent evidence suggests that the wrong ORF was originally chosen for this protein and supports an upstream ORF coding for a 63-residue protein.</text>
</comment>
<comment type="sequence caution" evidence="4">
    <conflict type="erroneous translation">
        <sequence resource="EMBL-CDS" id="AAH47657"/>
    </conflict>
    <text>Wrong choice of CDS.</text>
</comment>
<comment type="sequence caution" evidence="4">
    <conflict type="erroneous translation">
        <sequence resource="EMBL-CDS" id="AAY40967"/>
    </conflict>
    <text>Wrong choice of CDS.</text>
</comment>
<comment type="sequence caution" evidence="4">
    <conflict type="erroneous translation">
        <sequence resource="EMBL-CDS" id="EAX05253"/>
    </conflict>
    <text>Wrong choice of CDS.</text>
</comment>
<comment type="sequence caution" evidence="4">
    <conflict type="erroneous translation">
        <sequence resource="EMBL-CDS" id="EAX05254"/>
    </conflict>
    <text>Wrong choice of CDS.</text>
</comment>
<keyword id="KW-1003">Cell membrane</keyword>
<keyword id="KW-0472">Membrane</keyword>
<keyword id="KW-1185">Reference proteome</keyword>
<keyword id="KW-0812">Transmembrane</keyword>
<keyword id="KW-1133">Transmembrane helix</keyword>
<proteinExistence type="evidence at protein level"/>
<sequence length="63" mass="7323">MEWELNLLLYLALFFFLLFLLFLLLFVVIKQLKNSVANTAGALQPGRLSVHREPWGFSREQAV</sequence>
<accession>Q4W5P6</accession>
<accession>A0A2R8YEN4</accession>
<accession>D3DNW9</accession>
<accession>Q96NI2</accession>
<name>SIM43_HUMAN</name>
<reference key="1">
    <citation type="journal article" date="2005" name="Nature">
        <title>Generation and annotation of the DNA sequences of human chromosomes 2 and 4.</title>
        <authorList>
            <person name="Hillier L.W."/>
            <person name="Graves T.A."/>
            <person name="Fulton R.S."/>
            <person name="Fulton L.A."/>
            <person name="Pepin K.H."/>
            <person name="Minx P."/>
            <person name="Wagner-McPherson C."/>
            <person name="Layman D."/>
            <person name="Wylie K."/>
            <person name="Sekhon M."/>
            <person name="Becker M.C."/>
            <person name="Fewell G.A."/>
            <person name="Delehaunty K.D."/>
            <person name="Miner T.L."/>
            <person name="Nash W.E."/>
            <person name="Kremitzki C."/>
            <person name="Oddy L."/>
            <person name="Du H."/>
            <person name="Sun H."/>
            <person name="Bradshaw-Cordum H."/>
            <person name="Ali J."/>
            <person name="Carter J."/>
            <person name="Cordes M."/>
            <person name="Harris A."/>
            <person name="Isak A."/>
            <person name="van Brunt A."/>
            <person name="Nguyen C."/>
            <person name="Du F."/>
            <person name="Courtney L."/>
            <person name="Kalicki J."/>
            <person name="Ozersky P."/>
            <person name="Abbott S."/>
            <person name="Armstrong J."/>
            <person name="Belter E.A."/>
            <person name="Caruso L."/>
            <person name="Cedroni M."/>
            <person name="Cotton M."/>
            <person name="Davidson T."/>
            <person name="Desai A."/>
            <person name="Elliott G."/>
            <person name="Erb T."/>
            <person name="Fronick C."/>
            <person name="Gaige T."/>
            <person name="Haakenson W."/>
            <person name="Haglund K."/>
            <person name="Holmes A."/>
            <person name="Harkins R."/>
            <person name="Kim K."/>
            <person name="Kruchowski S.S."/>
            <person name="Strong C.M."/>
            <person name="Grewal N."/>
            <person name="Goyea E."/>
            <person name="Hou S."/>
            <person name="Levy A."/>
            <person name="Martinka S."/>
            <person name="Mead K."/>
            <person name="McLellan M.D."/>
            <person name="Meyer R."/>
            <person name="Randall-Maher J."/>
            <person name="Tomlinson C."/>
            <person name="Dauphin-Kohlberg S."/>
            <person name="Kozlowicz-Reilly A."/>
            <person name="Shah N."/>
            <person name="Swearengen-Shahid S."/>
            <person name="Snider J."/>
            <person name="Strong J.T."/>
            <person name="Thompson J."/>
            <person name="Yoakum M."/>
            <person name="Leonard S."/>
            <person name="Pearman C."/>
            <person name="Trani L."/>
            <person name="Radionenko M."/>
            <person name="Waligorski J.E."/>
            <person name="Wang C."/>
            <person name="Rock S.M."/>
            <person name="Tin-Wollam A.-M."/>
            <person name="Maupin R."/>
            <person name="Latreille P."/>
            <person name="Wendl M.C."/>
            <person name="Yang S.-P."/>
            <person name="Pohl C."/>
            <person name="Wallis J.W."/>
            <person name="Spieth J."/>
            <person name="Bieri T.A."/>
            <person name="Berkowicz N."/>
            <person name="Nelson J.O."/>
            <person name="Osborne J."/>
            <person name="Ding L."/>
            <person name="Meyer R."/>
            <person name="Sabo A."/>
            <person name="Shotland Y."/>
            <person name="Sinha P."/>
            <person name="Wohldmann P.E."/>
            <person name="Cook L.L."/>
            <person name="Hickenbotham M.T."/>
            <person name="Eldred J."/>
            <person name="Williams D."/>
            <person name="Jones T.A."/>
            <person name="She X."/>
            <person name="Ciccarelli F.D."/>
            <person name="Izaurralde E."/>
            <person name="Taylor J."/>
            <person name="Schmutz J."/>
            <person name="Myers R.M."/>
            <person name="Cox D.R."/>
            <person name="Huang X."/>
            <person name="McPherson J.D."/>
            <person name="Mardis E.R."/>
            <person name="Clifton S.W."/>
            <person name="Warren W.C."/>
            <person name="Chinwalla A.T."/>
            <person name="Eddy S.R."/>
            <person name="Marra M.A."/>
            <person name="Ovcharenko I."/>
            <person name="Furey T.S."/>
            <person name="Miller W."/>
            <person name="Eichler E.E."/>
            <person name="Bork P."/>
            <person name="Suyama M."/>
            <person name="Torrents D."/>
            <person name="Waterston R.H."/>
            <person name="Wilson R.K."/>
        </authorList>
    </citation>
    <scope>NUCLEOTIDE SEQUENCE [LARGE SCALE GENOMIC DNA]</scope>
</reference>
<reference key="2">
    <citation type="submission" date="2005-09" db="EMBL/GenBank/DDBJ databases">
        <authorList>
            <person name="Mural R.J."/>
            <person name="Istrail S."/>
            <person name="Sutton G.G."/>
            <person name="Florea L."/>
            <person name="Halpern A.L."/>
            <person name="Mobarry C.M."/>
            <person name="Lippert R."/>
            <person name="Walenz B."/>
            <person name="Shatkay H."/>
            <person name="Dew I."/>
            <person name="Miller J.R."/>
            <person name="Flanigan M.J."/>
            <person name="Edwards N.J."/>
            <person name="Bolanos R."/>
            <person name="Fasulo D."/>
            <person name="Halldorsson B.V."/>
            <person name="Hannenhalli S."/>
            <person name="Turner R."/>
            <person name="Yooseph S."/>
            <person name="Lu F."/>
            <person name="Nusskern D.R."/>
            <person name="Shue B.C."/>
            <person name="Zheng X.H."/>
            <person name="Zhong F."/>
            <person name="Delcher A.L."/>
            <person name="Huson D.H."/>
            <person name="Kravitz S.A."/>
            <person name="Mouchard L."/>
            <person name="Reinert K."/>
            <person name="Remington K.A."/>
            <person name="Clark A.G."/>
            <person name="Waterman M.S."/>
            <person name="Eichler E.E."/>
            <person name="Adams M.D."/>
            <person name="Hunkapiller M.W."/>
            <person name="Myers E.W."/>
            <person name="Venter J.C."/>
        </authorList>
    </citation>
    <scope>NUCLEOTIDE SEQUENCE [LARGE SCALE GENOMIC DNA]</scope>
</reference>
<reference key="3">
    <citation type="journal article" date="2004" name="Genome Res.">
        <title>The status, quality, and expansion of the NIH full-length cDNA project: the Mammalian Gene Collection (MGC).</title>
        <authorList>
            <consortium name="The MGC Project Team"/>
        </authorList>
    </citation>
    <scope>NUCLEOTIDE SEQUENCE [LARGE SCALE MRNA]</scope>
    <source>
        <tissue>Brain</tissue>
    </source>
</reference>
<reference key="4">
    <citation type="journal article" date="2022" name="Nat. Commun.">
        <title>A Nodal enhanced micropeptide NEMEP regulates glucose uptake during mesendoderm differentiation of embryonic stem cells.</title>
        <authorList>
            <person name="Fu H."/>
            <person name="Wang T."/>
            <person name="Kong X."/>
            <person name="Yan K."/>
            <person name="Yang Y."/>
            <person name="Cao J."/>
            <person name="Yuan Y."/>
            <person name="Wang N."/>
            <person name="Kee K."/>
            <person name="Lu Z.J."/>
            <person name="Xi Q."/>
        </authorList>
    </citation>
    <scope>FUNCTION</scope>
    <scope>INTERACTION WITH SLC2A1 AND SLC2A3</scope>
</reference>
<dbReference type="EMBL" id="AC079341">
    <property type="protein sequence ID" value="AAY40967.1"/>
    <property type="status" value="ALT_SEQ"/>
    <property type="molecule type" value="Genomic_DNA"/>
</dbReference>
<dbReference type="EMBL" id="CH471056">
    <property type="protein sequence ID" value="EAX05253.1"/>
    <property type="status" value="ALT_SEQ"/>
    <property type="molecule type" value="Genomic_DNA"/>
</dbReference>
<dbReference type="EMBL" id="CH471056">
    <property type="protein sequence ID" value="EAX05254.1"/>
    <property type="status" value="ALT_SEQ"/>
    <property type="molecule type" value="Genomic_DNA"/>
</dbReference>
<dbReference type="EMBL" id="BC047657">
    <property type="protein sequence ID" value="AAH47657.1"/>
    <property type="status" value="ALT_SEQ"/>
    <property type="molecule type" value="mRNA"/>
</dbReference>
<dbReference type="RefSeq" id="NP_001304766.1">
    <property type="nucleotide sequence ID" value="NM_001317837.1"/>
</dbReference>
<dbReference type="RefSeq" id="NP_001304767.1">
    <property type="nucleotide sequence ID" value="NM_001317838.1"/>
</dbReference>
<dbReference type="RefSeq" id="NP_001304768.1">
    <property type="nucleotide sequence ID" value="NM_001317839.1"/>
</dbReference>
<dbReference type="RefSeq" id="NP_001304770.1">
    <property type="nucleotide sequence ID" value="NM_001317841.1"/>
</dbReference>
<dbReference type="RefSeq" id="NP_001304771.1">
    <property type="nucleotide sequence ID" value="NM_001317842.1"/>
</dbReference>
<dbReference type="RefSeq" id="NP_001371261.1">
    <property type="nucleotide sequence ID" value="NM_001384332.1"/>
</dbReference>
<dbReference type="RefSeq" id="NP_001371262.1">
    <property type="nucleotide sequence ID" value="NM_001384333.1"/>
</dbReference>
<dbReference type="RefSeq" id="NP_001371263.1">
    <property type="nucleotide sequence ID" value="NM_001384334.1"/>
</dbReference>
<dbReference type="RefSeq" id="NP_689612.3">
    <property type="nucleotide sequence ID" value="NM_152399.3"/>
</dbReference>
<dbReference type="RefSeq" id="XP_005262794.1">
    <property type="nucleotide sequence ID" value="XM_005262737.2"/>
</dbReference>
<dbReference type="RefSeq" id="XP_016863214.1">
    <property type="nucleotide sequence ID" value="XM_017007725.1"/>
</dbReference>
<dbReference type="RefSeq" id="XP_054204872.1">
    <property type="nucleotide sequence ID" value="XM_054348897.1"/>
</dbReference>
<dbReference type="RefSeq" id="XP_054204873.1">
    <property type="nucleotide sequence ID" value="XM_054348898.1"/>
</dbReference>
<dbReference type="SMR" id="Q4W5P6"/>
<dbReference type="BioGRID" id="126320">
    <property type="interactions" value="3"/>
</dbReference>
<dbReference type="IntAct" id="Q4W5P6">
    <property type="interactions" value="3"/>
</dbReference>
<dbReference type="STRING" id="9606.ENSP00000495936"/>
<dbReference type="BioMuta" id="TMEM155"/>
<dbReference type="PaxDb" id="9606-ENSP00000336987"/>
<dbReference type="PeptideAtlas" id="Q4W5P6"/>
<dbReference type="Antibodypedia" id="77843">
    <property type="antibodies" value="4 antibodies from 4 providers"/>
</dbReference>
<dbReference type="DNASU" id="132332"/>
<dbReference type="Ensembl" id="ENST00000643663.2">
    <property type="protein sequence ID" value="ENSP00000495936.2"/>
    <property type="gene ID" value="ENSG00000164112.14"/>
</dbReference>
<dbReference type="Ensembl" id="ENST00000643802.2">
    <property type="protein sequence ID" value="ENSP00000495721.1"/>
    <property type="gene ID" value="ENSG00000164112.14"/>
</dbReference>
<dbReference type="GeneID" id="132332"/>
<dbReference type="MANE-Select" id="ENST00000643802.2">
    <property type="protein sequence ID" value="ENSP00000495721.1"/>
    <property type="RefSeq nucleotide sequence ID" value="NM_001384332.1"/>
    <property type="RefSeq protein sequence ID" value="NP_001371261.1"/>
</dbReference>
<dbReference type="UCSC" id="uc003idx.2">
    <property type="organism name" value="human"/>
</dbReference>
<dbReference type="AGR" id="HGNC:55077"/>
<dbReference type="GeneCards" id="SMIM43"/>
<dbReference type="HGNC" id="HGNC:55077">
    <property type="gene designation" value="SMIM43"/>
</dbReference>
<dbReference type="HPA" id="ENSG00000164112">
    <property type="expression patterns" value="Tissue enriched (brain)"/>
</dbReference>
<dbReference type="neXtProt" id="NX_Q4W5P6"/>
<dbReference type="OpenTargets" id="ENSG00000164112"/>
<dbReference type="VEuPathDB" id="HostDB:ENSG00000164112"/>
<dbReference type="eggNOG" id="ENOG502R363">
    <property type="taxonomic scope" value="Eukaryota"/>
</dbReference>
<dbReference type="GeneTree" id="ENSGT01010000222815"/>
<dbReference type="HOGENOM" id="CLU_160786_0_0_1"/>
<dbReference type="InParanoid" id="Q4W5P6"/>
<dbReference type="OrthoDB" id="9450496at2759"/>
<dbReference type="PAN-GO" id="Q4W5P6">
    <property type="GO annotations" value="0 GO annotations based on evolutionary models"/>
</dbReference>
<dbReference type="PhylomeDB" id="Q4W5P6"/>
<dbReference type="TreeFam" id="TF342440"/>
<dbReference type="PathwayCommons" id="Q4W5P6"/>
<dbReference type="SignaLink" id="Q4W5P6"/>
<dbReference type="BioGRID-ORCS" id="132332">
    <property type="hits" value="16 hits in 1116 CRISPR screens"/>
</dbReference>
<dbReference type="GenomeRNAi" id="132332"/>
<dbReference type="Pharos" id="Q4W5P6">
    <property type="development level" value="Tdark"/>
</dbReference>
<dbReference type="PRO" id="PR:Q4W5P6"/>
<dbReference type="Proteomes" id="UP000005640">
    <property type="component" value="Chromosome 4"/>
</dbReference>
<dbReference type="RNAct" id="Q4W5P6">
    <property type="molecule type" value="protein"/>
</dbReference>
<dbReference type="Bgee" id="ENSG00000164112">
    <property type="expression patterns" value="Expressed in Brodmann (1909) area 46 and 110 other cell types or tissues"/>
</dbReference>
<dbReference type="GO" id="GO:0005886">
    <property type="term" value="C:plasma membrane"/>
    <property type="evidence" value="ECO:0000250"/>
    <property type="project" value="UniProtKB"/>
</dbReference>
<dbReference type="GO" id="GO:0044325">
    <property type="term" value="F:transmembrane transporter binding"/>
    <property type="evidence" value="ECO:0000353"/>
    <property type="project" value="UniProtKB"/>
</dbReference>
<dbReference type="GO" id="GO:0048382">
    <property type="term" value="P:mesendoderm development"/>
    <property type="evidence" value="ECO:0000250"/>
    <property type="project" value="UniProtKB"/>
</dbReference>
<dbReference type="InterPro" id="IPR054149">
    <property type="entry name" value="SMIM43"/>
</dbReference>
<dbReference type="Pfam" id="PF21976">
    <property type="entry name" value="SMIM43"/>
    <property type="match status" value="1"/>
</dbReference>
<protein>
    <recommendedName>
        <fullName evidence="5">Small integral membrane protein 43</fullName>
    </recommendedName>
    <alternativeName>
        <fullName>Nodal enhanced mesendoderm micropeptide</fullName>
        <shortName>NEMEP</shortName>
    </alternativeName>
</protein>
<gene>
    <name evidence="5" type="primary">SMIM43</name>
    <name evidence="4" type="synonym">TMEM155</name>
</gene>
<feature type="chain" id="PRO_0000282437" description="Small integral membrane protein 43">
    <location>
        <begin position="1"/>
        <end position="63"/>
    </location>
</feature>
<feature type="transmembrane region" description="Helical" evidence="2">
    <location>
        <begin position="9"/>
        <end position="29"/>
    </location>
</feature>
<feature type="region of interest" description="Important for interaction with SLC2A1 and SLC2A3" evidence="1">
    <location>
        <begin position="7"/>
        <end position="29"/>
    </location>
</feature>
<feature type="region of interest" description="Important for interaction with SLC2A1 and SLC2A3" evidence="1">
    <location>
        <begin position="51"/>
        <end position="57"/>
    </location>
</feature>
<feature type="sequence conflict" description="In Ref. 3; AAH47657." evidence="4" ref="3">
    <original>R</original>
    <variation>H</variation>
    <location>
        <position position="52"/>
    </location>
</feature>
<evidence type="ECO:0000250" key="1">
    <source>
        <dbReference type="UniProtKB" id="A0A286YD83"/>
    </source>
</evidence>
<evidence type="ECO:0000255" key="2"/>
<evidence type="ECO:0000269" key="3">
    <source>
    </source>
</evidence>
<evidence type="ECO:0000305" key="4"/>
<evidence type="ECO:0000312" key="5">
    <source>
        <dbReference type="HGNC" id="HGNC:55077"/>
    </source>
</evidence>